<reference key="1">
    <citation type="journal article" date="1999" name="Science">
        <title>Genome sequence of the radioresistant bacterium Deinococcus radiodurans R1.</title>
        <authorList>
            <person name="White O."/>
            <person name="Eisen J.A."/>
            <person name="Heidelberg J.F."/>
            <person name="Hickey E.K."/>
            <person name="Peterson J.D."/>
            <person name="Dodson R.J."/>
            <person name="Haft D.H."/>
            <person name="Gwinn M.L."/>
            <person name="Nelson W.C."/>
            <person name="Richardson D.L."/>
            <person name="Moffat K.S."/>
            <person name="Qin H."/>
            <person name="Jiang L."/>
            <person name="Pamphile W."/>
            <person name="Crosby M."/>
            <person name="Shen M."/>
            <person name="Vamathevan J.J."/>
            <person name="Lam P."/>
            <person name="McDonald L.A."/>
            <person name="Utterback T.R."/>
            <person name="Zalewski C."/>
            <person name="Makarova K.S."/>
            <person name="Aravind L."/>
            <person name="Daly M.J."/>
            <person name="Minton K.W."/>
            <person name="Fleischmann R.D."/>
            <person name="Ketchum K.A."/>
            <person name="Nelson K.E."/>
            <person name="Salzberg S.L."/>
            <person name="Smith H.O."/>
            <person name="Venter J.C."/>
            <person name="Fraser C.M."/>
        </authorList>
    </citation>
    <scope>NUCLEOTIDE SEQUENCE [LARGE SCALE GENOMIC DNA]</scope>
    <source>
        <strain>ATCC 13939 / DSM 20539 / JCM 16871 / CCUG 27074 / LMG 4051 / NBRC 15346 / NCIMB 9279 / VKM B-1422 / R1</strain>
    </source>
</reference>
<reference key="2">
    <citation type="journal article" date="2004" name="PLoS Biol.">
        <title>Preserving genome integrity: the DdrA protein of Deinococcus radiodurans R1.</title>
        <authorList>
            <person name="Harris D.R."/>
            <person name="Tanaka M."/>
            <person name="Saveliev S.V."/>
            <person name="Jolivet E."/>
            <person name="Earl A.M."/>
            <person name="Cox M.M."/>
            <person name="Battista J.R."/>
        </authorList>
    </citation>
    <scope>PROTEIN SEQUENCE OF 1-6</scope>
    <scope>FUNCTION</scope>
    <scope>INDUCTION</scope>
    <scope>MASS SPECTROMETRY</scope>
    <scope>DISRUPTION PHENOTYPE</scope>
    <scope>SUBUNIT</scope>
</reference>
<reference key="3">
    <citation type="journal article" date="2004" name="Genetics">
        <title>Analysis of Deinococcus radiodurans's transcriptional response to ionizing radiation and desiccation reveals novel proteins that contribute to extreme radioresistance.</title>
        <authorList>
            <person name="Tanaka M."/>
            <person name="Earl A.M."/>
            <person name="Howell H.A."/>
            <person name="Park M.J."/>
            <person name="Eisen J.A."/>
            <person name="Peterson S.N."/>
            <person name="Battista J.R."/>
        </authorList>
    </citation>
    <scope>INDUCTION</scope>
    <scope>ROLE IN RADIORESISTANCE</scope>
    <scope>DISRUPTION PHENOTYPE</scope>
    <source>
        <strain>ATCC 13939 / DSM 20539 / JCM 16871 / CCUG 27074 / LMG 4051 / NBRC 15346 / NCIMB 9279 / VKM B-1422 / R1</strain>
    </source>
</reference>
<dbReference type="EMBL" id="AE000513">
    <property type="protein sequence ID" value="AAF10011.1"/>
    <property type="molecule type" value="Genomic_DNA"/>
</dbReference>
<dbReference type="PIR" id="E75520">
    <property type="entry name" value="E75520"/>
</dbReference>
<dbReference type="RefSeq" id="NP_294146.1">
    <property type="nucleotide sequence ID" value="NC_001263.1"/>
</dbReference>
<dbReference type="RefSeq" id="WP_010887068.1">
    <property type="nucleotide sequence ID" value="NC_001263.1"/>
</dbReference>
<dbReference type="STRING" id="243230.DR_0423"/>
<dbReference type="PaxDb" id="243230-DR_0423"/>
<dbReference type="EnsemblBacteria" id="AAF10011">
    <property type="protein sequence ID" value="AAF10011"/>
    <property type="gene ID" value="DR_0423"/>
</dbReference>
<dbReference type="GeneID" id="69516655"/>
<dbReference type="KEGG" id="dra:DR_0423"/>
<dbReference type="PATRIC" id="fig|243230.17.peg.597"/>
<dbReference type="eggNOG" id="COG4712">
    <property type="taxonomic scope" value="Bacteria"/>
</dbReference>
<dbReference type="HOGENOM" id="CLU_113751_0_0_0"/>
<dbReference type="InParanoid" id="Q9RX92"/>
<dbReference type="OrthoDB" id="9805874at2"/>
<dbReference type="Proteomes" id="UP000002524">
    <property type="component" value="Chromosome 1"/>
</dbReference>
<dbReference type="GO" id="GO:0003677">
    <property type="term" value="F:DNA binding"/>
    <property type="evidence" value="ECO:0007669"/>
    <property type="project" value="UniProtKB-KW"/>
</dbReference>
<dbReference type="GO" id="GO:0071465">
    <property type="term" value="P:cellular response to desiccation"/>
    <property type="evidence" value="ECO:0000270"/>
    <property type="project" value="UniProtKB"/>
</dbReference>
<dbReference type="GO" id="GO:0071480">
    <property type="term" value="P:cellular response to gamma radiation"/>
    <property type="evidence" value="ECO:0000270"/>
    <property type="project" value="UniProtKB"/>
</dbReference>
<dbReference type="GO" id="GO:0006281">
    <property type="term" value="P:DNA repair"/>
    <property type="evidence" value="ECO:0000315"/>
    <property type="project" value="UniProtKB"/>
</dbReference>
<dbReference type="InterPro" id="IPR041247">
    <property type="entry name" value="Rad52_fam"/>
</dbReference>
<dbReference type="Pfam" id="PF04098">
    <property type="entry name" value="Rad52_Rad22"/>
    <property type="match status" value="1"/>
</dbReference>
<sequence length="208" mass="23002">MKLSDVQKRLQAPFPAHTVSWKPAAFNAERTRALLLAHVDARAVQDRLDAVCPDDWSFEMEVVSGAEVPTVKGRLTVLGVTREDIGEAPEGSMAAYKAAASDAMKRCAVQFGIGRYLYDLPKQWADWDDARRGPKHLPELPEWARPDHERTPGGAHLVQAMEQLRYELPEDLDLQREVYKHLKAALGSIHPVPTGPVPTNPVQGGRAA</sequence>
<protein>
    <recommendedName>
        <fullName>Single-stranded DNA-binding protein DdrA</fullName>
    </recommendedName>
    <alternativeName>
        <fullName>DNA damage response protein A</fullName>
    </alternativeName>
</protein>
<name>DDRA_DEIRA</name>
<feature type="chain" id="PRO_0000394495" description="Single-stranded DNA-binding protein DdrA">
    <location>
        <begin position="1"/>
        <end position="208"/>
    </location>
</feature>
<comment type="function">
    <text evidence="1 2">ssDNA-binding protein that contributes to the ionizing radiation resistance of D.radiodurans. Plays a role in DNA repair and genome reconstitution, in a RecA-independent process, since DdrA is essential for recovery from severe genomic fragmentation as a result of exposure to severe levels of ionizing radiation in an environment lacking nutrients. In vitro, binds to the 3'-ends of single-stranded DNA, protecting them from nuclease degradation. Thus, DdrA is part of a DNA end-protection system that helps to preserve genome integrity following irradiation or desiccation. Does not display DNA strand annealing activity, unlike eukaryotic Rad52 protein homologs.</text>
</comment>
<comment type="subunit">
    <text evidence="1">Homooligomer composed of 8 to 10 subunits; probably arranged in a ring-structure.</text>
</comment>
<comment type="induction">
    <text evidence="1 2">Induced to high levels following extreme ionizing radiation exposure. Also highly induced in response to desiccation stress.</text>
</comment>
<comment type="mass spectrometry" mass="23012.8" error="3.46" method="Unknown" evidence="1"/>
<comment type="disruption phenotype">
    <text evidence="1 2">Cells lacking this gene show a normal growth rate, do not exhibit a decrease in the efficiency of natural transformation, but display a reduced capacity to survive ionizing radiation when exposed at doses superior to 2.5 kGy and exhibit increased sensitivity to mitomycin C.</text>
</comment>
<comment type="similarity">
    <text evidence="3">Belongs to the RAD52 family.</text>
</comment>
<gene>
    <name type="primary">ddrA</name>
    <name type="ordered locus">DR_0423</name>
</gene>
<keyword id="KW-0903">Direct protein sequencing</keyword>
<keyword id="KW-0227">DNA damage</keyword>
<keyword id="KW-0234">DNA repair</keyword>
<keyword id="KW-0238">DNA-binding</keyword>
<keyword id="KW-1185">Reference proteome</keyword>
<keyword id="KW-0346">Stress response</keyword>
<evidence type="ECO:0000269" key="1">
    <source>
    </source>
</evidence>
<evidence type="ECO:0000269" key="2">
    <source>
    </source>
</evidence>
<evidence type="ECO:0000305" key="3"/>
<proteinExistence type="evidence at protein level"/>
<accession>Q9RX92</accession>
<organism>
    <name type="scientific">Deinococcus radiodurans (strain ATCC 13939 / DSM 20539 / JCM 16871 / CCUG 27074 / LMG 4051 / NBRC 15346 / NCIMB 9279 / VKM B-1422 / R1)</name>
    <dbReference type="NCBI Taxonomy" id="243230"/>
    <lineage>
        <taxon>Bacteria</taxon>
        <taxon>Thermotogati</taxon>
        <taxon>Deinococcota</taxon>
        <taxon>Deinococci</taxon>
        <taxon>Deinococcales</taxon>
        <taxon>Deinococcaceae</taxon>
        <taxon>Deinococcus</taxon>
    </lineage>
</organism>